<gene>
    <name type="primary">fes1</name>
    <name type="ORF">ATEG_06972</name>
</gene>
<accession>Q0CH70</accession>
<sequence>MDANMNKILKWSIQNSTNASSDQNAAADATSRGLTPEMMATLFGGPSDADLMKASMEALRSDEVDLENKLVAFDNFEQLIESIDNANNLEPLGLWTPLVELLRHEEADMRRMAAWCVGTAVQNNEKAQDKLVVLNALPTLVAMSTSDPNPAARKKAVYALSSAVRNYQPAMDEVAKHLPEGYPRGEKIDAADMDAVDGIMDKLRAHPVESSA</sequence>
<protein>
    <recommendedName>
        <fullName>Hsp70 nucleotide exchange factor fes1</fullName>
    </recommendedName>
</protein>
<name>FES1_ASPTN</name>
<comment type="function">
    <text evidence="1">Functions as a nucleotide exchange factor (NEF) for Hsp70 chaperones which accelerates the release of ADP. Required for fully efficient Hsp70-mediated folding of proteins (By similarity).</text>
</comment>
<comment type="subcellular location">
    <subcellularLocation>
        <location evidence="1">Cytoplasm</location>
    </subcellularLocation>
</comment>
<comment type="similarity">
    <text evidence="2">Belongs to the FES1 family.</text>
</comment>
<feature type="chain" id="PRO_0000285387" description="Hsp70 nucleotide exchange factor fes1">
    <location>
        <begin position="1"/>
        <end position="212"/>
    </location>
</feature>
<feature type="repeat" description="ARM 1">
    <location>
        <begin position="23"/>
        <end position="64"/>
    </location>
</feature>
<feature type="repeat" description="ARM 2">
    <location>
        <begin position="83"/>
        <end position="122"/>
    </location>
</feature>
<feature type="repeat" description="ARM 3">
    <location>
        <begin position="125"/>
        <end position="165"/>
    </location>
</feature>
<proteinExistence type="inferred from homology"/>
<reference key="1">
    <citation type="submission" date="2005-09" db="EMBL/GenBank/DDBJ databases">
        <title>Annotation of the Aspergillus terreus NIH2624 genome.</title>
        <authorList>
            <person name="Birren B.W."/>
            <person name="Lander E.S."/>
            <person name="Galagan J.E."/>
            <person name="Nusbaum C."/>
            <person name="Devon K."/>
            <person name="Henn M."/>
            <person name="Ma L.-J."/>
            <person name="Jaffe D.B."/>
            <person name="Butler J."/>
            <person name="Alvarez P."/>
            <person name="Gnerre S."/>
            <person name="Grabherr M."/>
            <person name="Kleber M."/>
            <person name="Mauceli E.W."/>
            <person name="Brockman W."/>
            <person name="Rounsley S."/>
            <person name="Young S.K."/>
            <person name="LaButti K."/>
            <person name="Pushparaj V."/>
            <person name="DeCaprio D."/>
            <person name="Crawford M."/>
            <person name="Koehrsen M."/>
            <person name="Engels R."/>
            <person name="Montgomery P."/>
            <person name="Pearson M."/>
            <person name="Howarth C."/>
            <person name="Larson L."/>
            <person name="Luoma S."/>
            <person name="White J."/>
            <person name="Alvarado L."/>
            <person name="Kodira C.D."/>
            <person name="Zeng Q."/>
            <person name="Oleary S."/>
            <person name="Yandava C."/>
            <person name="Denning D.W."/>
            <person name="Nierman W.C."/>
            <person name="Milne T."/>
            <person name="Madden K."/>
        </authorList>
    </citation>
    <scope>NUCLEOTIDE SEQUENCE [LARGE SCALE GENOMIC DNA]</scope>
    <source>
        <strain>NIH 2624 / FGSC A1156</strain>
    </source>
</reference>
<evidence type="ECO:0000250" key="1"/>
<evidence type="ECO:0000305" key="2"/>
<dbReference type="EMBL" id="CH476603">
    <property type="protein sequence ID" value="EAU32356.1"/>
    <property type="molecule type" value="Genomic_DNA"/>
</dbReference>
<dbReference type="RefSeq" id="XP_001209658.1">
    <property type="nucleotide sequence ID" value="XM_001209658.1"/>
</dbReference>
<dbReference type="SMR" id="Q0CH70"/>
<dbReference type="STRING" id="341663.Q0CH70"/>
<dbReference type="EnsemblFungi" id="EAU32356">
    <property type="protein sequence ID" value="EAU32356"/>
    <property type="gene ID" value="ATEG_06972"/>
</dbReference>
<dbReference type="GeneID" id="4318895"/>
<dbReference type="VEuPathDB" id="FungiDB:ATEG_06972"/>
<dbReference type="eggNOG" id="KOG2160">
    <property type="taxonomic scope" value="Eukaryota"/>
</dbReference>
<dbReference type="HOGENOM" id="CLU_084507_0_0_1"/>
<dbReference type="OMA" id="LKWSVEN"/>
<dbReference type="OrthoDB" id="10250458at2759"/>
<dbReference type="Proteomes" id="UP000007963">
    <property type="component" value="Unassembled WGS sequence"/>
</dbReference>
<dbReference type="GO" id="GO:0005829">
    <property type="term" value="C:cytosol"/>
    <property type="evidence" value="ECO:0007669"/>
    <property type="project" value="EnsemblFungi"/>
</dbReference>
<dbReference type="GO" id="GO:0005783">
    <property type="term" value="C:endoplasmic reticulum"/>
    <property type="evidence" value="ECO:0007669"/>
    <property type="project" value="TreeGrafter"/>
</dbReference>
<dbReference type="GO" id="GO:0000774">
    <property type="term" value="F:adenyl-nucleotide exchange factor activity"/>
    <property type="evidence" value="ECO:0007669"/>
    <property type="project" value="EnsemblFungi"/>
</dbReference>
<dbReference type="GO" id="GO:0071629">
    <property type="term" value="P:cytoplasm protein quality control by the ubiquitin-proteasome system"/>
    <property type="evidence" value="ECO:0007669"/>
    <property type="project" value="EnsemblFungi"/>
</dbReference>
<dbReference type="GO" id="GO:0006417">
    <property type="term" value="P:regulation of translation"/>
    <property type="evidence" value="ECO:0007669"/>
    <property type="project" value="UniProtKB-KW"/>
</dbReference>
<dbReference type="FunFam" id="1.25.10.10:FF:000434">
    <property type="entry name" value="Hsp70 nucleotide exchange factor fes1"/>
    <property type="match status" value="1"/>
</dbReference>
<dbReference type="Gene3D" id="1.25.10.10">
    <property type="entry name" value="Leucine-rich Repeat Variant"/>
    <property type="match status" value="1"/>
</dbReference>
<dbReference type="InterPro" id="IPR011989">
    <property type="entry name" value="ARM-like"/>
</dbReference>
<dbReference type="InterPro" id="IPR016024">
    <property type="entry name" value="ARM-type_fold"/>
</dbReference>
<dbReference type="InterPro" id="IPR050693">
    <property type="entry name" value="Hsp70_NEF-Inhibitors"/>
</dbReference>
<dbReference type="InterPro" id="IPR013918">
    <property type="entry name" value="Nucleotide_exch_fac_Fes1"/>
</dbReference>
<dbReference type="PANTHER" id="PTHR19316:SF18">
    <property type="entry name" value="HSP70-BINDING PROTEIN 1"/>
    <property type="match status" value="1"/>
</dbReference>
<dbReference type="PANTHER" id="PTHR19316">
    <property type="entry name" value="PROTEIN FOLDING REGULATOR"/>
    <property type="match status" value="1"/>
</dbReference>
<dbReference type="Pfam" id="PF08609">
    <property type="entry name" value="Fes1"/>
    <property type="match status" value="1"/>
</dbReference>
<dbReference type="Pfam" id="PF13513">
    <property type="entry name" value="HEAT_EZ"/>
    <property type="match status" value="1"/>
</dbReference>
<dbReference type="SUPFAM" id="SSF48371">
    <property type="entry name" value="ARM repeat"/>
    <property type="match status" value="1"/>
</dbReference>
<organism>
    <name type="scientific">Aspergillus terreus (strain NIH 2624 / FGSC A1156)</name>
    <dbReference type="NCBI Taxonomy" id="341663"/>
    <lineage>
        <taxon>Eukaryota</taxon>
        <taxon>Fungi</taxon>
        <taxon>Dikarya</taxon>
        <taxon>Ascomycota</taxon>
        <taxon>Pezizomycotina</taxon>
        <taxon>Eurotiomycetes</taxon>
        <taxon>Eurotiomycetidae</taxon>
        <taxon>Eurotiales</taxon>
        <taxon>Aspergillaceae</taxon>
        <taxon>Aspergillus</taxon>
        <taxon>Aspergillus subgen. Circumdati</taxon>
    </lineage>
</organism>
<keyword id="KW-0963">Cytoplasm</keyword>
<keyword id="KW-1185">Reference proteome</keyword>
<keyword id="KW-0677">Repeat</keyword>
<keyword id="KW-0810">Translation regulation</keyword>